<keyword id="KW-0027">Amidation</keyword>
<keyword id="KW-0903">Direct protein sequencing</keyword>
<keyword id="KW-0372">Hormone</keyword>
<keyword id="KW-0964">Secreted</keyword>
<evidence type="ECO:0000269" key="1">
    <source>
    </source>
</evidence>
<evidence type="ECO:0000305" key="2"/>
<reference key="1">
    <citation type="journal article" date="2000" name="Proc. Natl. Acad. Sci. U.S.A.">
        <title>Cockroach diuretic hormones: characterization of a calcitonin-like peptide in insects.</title>
        <authorList>
            <person name="Furuya K."/>
            <person name="Milchak R.J."/>
            <person name="Schegg K.M."/>
            <person name="Zhang J."/>
            <person name="Tobe S.S."/>
            <person name="Coast G.M."/>
            <person name="Schooley D.A."/>
        </authorList>
    </citation>
    <scope>PROTEIN SEQUENCE</scope>
    <scope>FUNCTION</scope>
    <scope>AMIDATION AT ILE-46</scope>
    <scope>MASS SPECTROMETRY</scope>
    <source>
        <tissue>Brain</tissue>
        <tissue>Corpora cardiaca</tissue>
    </source>
</reference>
<comment type="function">
    <text evidence="1">Regulation of fluid secretion. Stimulates primary urine secretion by Malpighian tubules and causes a dose-dependent stimulation of cAMP levels in the tubules. Has a greater effect on the transport of Na(+) then K(+) ions. In vitro, has synergistic effects with the smaller diuretic hormone DH(31) which co-occurs with it.</text>
</comment>
<comment type="subcellular location">
    <subcellularLocation>
        <location>Secreted</location>
    </subcellularLocation>
</comment>
<comment type="mass spectrometry" mass="5322.0" error="0.1" method="Electrospray" evidence="1"/>
<comment type="similarity">
    <text evidence="2">Belongs to the sauvagine/corticotropin-releasing factor/urotensin I family.</text>
</comment>
<dbReference type="SMR" id="P82373"/>
<dbReference type="GO" id="GO:0005576">
    <property type="term" value="C:extracellular region"/>
    <property type="evidence" value="ECO:0007669"/>
    <property type="project" value="UniProtKB-SubCell"/>
</dbReference>
<dbReference type="GO" id="GO:0005179">
    <property type="term" value="F:hormone activity"/>
    <property type="evidence" value="ECO:0007669"/>
    <property type="project" value="UniProtKB-KW"/>
</dbReference>
<dbReference type="InterPro" id="IPR018446">
    <property type="entry name" value="Corticotropin-releasing_fac_CS"/>
</dbReference>
<dbReference type="InterPro" id="IPR000187">
    <property type="entry name" value="CRF"/>
</dbReference>
<dbReference type="Pfam" id="PF00473">
    <property type="entry name" value="CRF"/>
    <property type="match status" value="1"/>
</dbReference>
<dbReference type="SMART" id="SM00039">
    <property type="entry name" value="CRF"/>
    <property type="match status" value="1"/>
</dbReference>
<dbReference type="PROSITE" id="PS00511">
    <property type="entry name" value="CRF"/>
    <property type="match status" value="1"/>
</dbReference>
<sequence length="46" mass="5322">TGTGPSLSIVNPLDVLRQRLLLEIARRRMRQTQNMIQANRDFLESI</sequence>
<feature type="chain" id="PRO_0000221017" description="Diuretic hormone class 1">
    <location>
        <begin position="1"/>
        <end position="46"/>
    </location>
</feature>
<feature type="modified residue" description="Isoleucine amide" evidence="1">
    <location>
        <position position="46"/>
    </location>
</feature>
<organism>
    <name type="scientific">Diploptera punctata</name>
    <name type="common">Pacific beetle cockroach</name>
    <dbReference type="NCBI Taxonomy" id="6984"/>
    <lineage>
        <taxon>Eukaryota</taxon>
        <taxon>Metazoa</taxon>
        <taxon>Ecdysozoa</taxon>
        <taxon>Arthropoda</taxon>
        <taxon>Hexapoda</taxon>
        <taxon>Insecta</taxon>
        <taxon>Pterygota</taxon>
        <taxon>Neoptera</taxon>
        <taxon>Polyneoptera</taxon>
        <taxon>Dictyoptera</taxon>
        <taxon>Blattodea</taxon>
        <taxon>Blaberoidea</taxon>
        <taxon>Blaberidae</taxon>
        <taxon>Diplopterinae</taxon>
        <taxon>Diploptera</taxon>
    </lineage>
</organism>
<name>DIUH_DIPPU</name>
<protein>
    <recommendedName>
        <fullName>Diuretic hormone class 1</fullName>
    </recommendedName>
    <alternativeName>
        <fullName>DH(46)</fullName>
    </alternativeName>
    <alternativeName>
        <fullName>Diuretic hormone class I</fullName>
    </alternativeName>
    <alternativeName>
        <fullName>Diuretic peptide</fullName>
        <shortName>DP</shortName>
    </alternativeName>
</protein>
<proteinExistence type="evidence at protein level"/>
<accession>P82373</accession>